<organism>
    <name type="scientific">Burkholderia mallei (strain SAVP1)</name>
    <dbReference type="NCBI Taxonomy" id="320388"/>
    <lineage>
        <taxon>Bacteria</taxon>
        <taxon>Pseudomonadati</taxon>
        <taxon>Pseudomonadota</taxon>
        <taxon>Betaproteobacteria</taxon>
        <taxon>Burkholderiales</taxon>
        <taxon>Burkholderiaceae</taxon>
        <taxon>Burkholderia</taxon>
        <taxon>pseudomallei group</taxon>
    </lineage>
</organism>
<keyword id="KW-0963">Cytoplasm</keyword>
<keyword id="KW-0342">GTP-binding</keyword>
<keyword id="KW-0378">Hydrolase</keyword>
<keyword id="KW-0460">Magnesium</keyword>
<keyword id="KW-0479">Metal-binding</keyword>
<keyword id="KW-0547">Nucleotide-binding</keyword>
<sequence length="372" mass="40150">MKFIDEARIEVIAGDGGDGSASMRREKFVPFGGPDGGDGGRGGSVYVIADRNINTLIDYRYAKKHMARNGENGRGSDCYGKGGDDITLRMPVGTVINDMDTGELIADLTEHDQKVLVAKGGAGGLGNLHFKSSTNRAPRQKTDGKPGERRMLKLELKVLADVGLLGMPNAGKSTFISSVSNAKPKIADYPFTTLAPNLGVVRVGPGKSFVIADIPGLIEGAAEGAGLGHQFLRHLQRTGLLLHLVDLAPFDERVDPVAEARAIVGELRKYDESLYEKPRWLVLNKLDMVPEDERRARVADFIERFGWTGPVFEISALTGQGCEGLVYAIHDYLVEHSDAHRAELAEDLASDVRFRDAPGAGGEPHERDAGAH</sequence>
<gene>
    <name evidence="1" type="primary">obg</name>
    <name type="ordered locus">BMASAVP1_A0444</name>
</gene>
<dbReference type="EC" id="3.6.5.-" evidence="1"/>
<dbReference type="EMBL" id="CP000526">
    <property type="protein sequence ID" value="ABM49978.1"/>
    <property type="molecule type" value="Genomic_DNA"/>
</dbReference>
<dbReference type="SMR" id="A1V0P1"/>
<dbReference type="KEGG" id="bmv:BMASAVP1_A0444"/>
<dbReference type="HOGENOM" id="CLU_011747_2_0_4"/>
<dbReference type="GO" id="GO:0005737">
    <property type="term" value="C:cytoplasm"/>
    <property type="evidence" value="ECO:0007669"/>
    <property type="project" value="UniProtKB-SubCell"/>
</dbReference>
<dbReference type="GO" id="GO:0005525">
    <property type="term" value="F:GTP binding"/>
    <property type="evidence" value="ECO:0007669"/>
    <property type="project" value="UniProtKB-UniRule"/>
</dbReference>
<dbReference type="GO" id="GO:0003924">
    <property type="term" value="F:GTPase activity"/>
    <property type="evidence" value="ECO:0007669"/>
    <property type="project" value="UniProtKB-UniRule"/>
</dbReference>
<dbReference type="GO" id="GO:0000287">
    <property type="term" value="F:magnesium ion binding"/>
    <property type="evidence" value="ECO:0007669"/>
    <property type="project" value="InterPro"/>
</dbReference>
<dbReference type="GO" id="GO:0042254">
    <property type="term" value="P:ribosome biogenesis"/>
    <property type="evidence" value="ECO:0007669"/>
    <property type="project" value="UniProtKB-UniRule"/>
</dbReference>
<dbReference type="CDD" id="cd01898">
    <property type="entry name" value="Obg"/>
    <property type="match status" value="1"/>
</dbReference>
<dbReference type="FunFam" id="2.70.210.12:FF:000001">
    <property type="entry name" value="GTPase Obg"/>
    <property type="match status" value="1"/>
</dbReference>
<dbReference type="Gene3D" id="2.70.210.12">
    <property type="entry name" value="GTP1/OBG domain"/>
    <property type="match status" value="1"/>
</dbReference>
<dbReference type="Gene3D" id="3.40.50.300">
    <property type="entry name" value="P-loop containing nucleotide triphosphate hydrolases"/>
    <property type="match status" value="1"/>
</dbReference>
<dbReference type="HAMAP" id="MF_01454">
    <property type="entry name" value="GTPase_Obg"/>
    <property type="match status" value="1"/>
</dbReference>
<dbReference type="InterPro" id="IPR031167">
    <property type="entry name" value="G_OBG"/>
</dbReference>
<dbReference type="InterPro" id="IPR006073">
    <property type="entry name" value="GTP-bd"/>
</dbReference>
<dbReference type="InterPro" id="IPR014100">
    <property type="entry name" value="GTP-bd_Obg/CgtA"/>
</dbReference>
<dbReference type="InterPro" id="IPR006074">
    <property type="entry name" value="GTP1-OBG_CS"/>
</dbReference>
<dbReference type="InterPro" id="IPR006169">
    <property type="entry name" value="GTP1_OBG_dom"/>
</dbReference>
<dbReference type="InterPro" id="IPR036726">
    <property type="entry name" value="GTP1_OBG_dom_sf"/>
</dbReference>
<dbReference type="InterPro" id="IPR045086">
    <property type="entry name" value="OBG_GTPase"/>
</dbReference>
<dbReference type="InterPro" id="IPR027417">
    <property type="entry name" value="P-loop_NTPase"/>
</dbReference>
<dbReference type="NCBIfam" id="TIGR02729">
    <property type="entry name" value="Obg_CgtA"/>
    <property type="match status" value="1"/>
</dbReference>
<dbReference type="NCBIfam" id="NF008954">
    <property type="entry name" value="PRK12296.1"/>
    <property type="match status" value="1"/>
</dbReference>
<dbReference type="NCBIfam" id="NF008955">
    <property type="entry name" value="PRK12297.1"/>
    <property type="match status" value="1"/>
</dbReference>
<dbReference type="NCBIfam" id="NF008956">
    <property type="entry name" value="PRK12299.1"/>
    <property type="match status" value="1"/>
</dbReference>
<dbReference type="PANTHER" id="PTHR11702">
    <property type="entry name" value="DEVELOPMENTALLY REGULATED GTP-BINDING PROTEIN-RELATED"/>
    <property type="match status" value="1"/>
</dbReference>
<dbReference type="PANTHER" id="PTHR11702:SF31">
    <property type="entry name" value="MITOCHONDRIAL RIBOSOME-ASSOCIATED GTPASE 2"/>
    <property type="match status" value="1"/>
</dbReference>
<dbReference type="Pfam" id="PF01018">
    <property type="entry name" value="GTP1_OBG"/>
    <property type="match status" value="1"/>
</dbReference>
<dbReference type="Pfam" id="PF01926">
    <property type="entry name" value="MMR_HSR1"/>
    <property type="match status" value="1"/>
</dbReference>
<dbReference type="PIRSF" id="PIRSF002401">
    <property type="entry name" value="GTP_bd_Obg/CgtA"/>
    <property type="match status" value="1"/>
</dbReference>
<dbReference type="PRINTS" id="PR00326">
    <property type="entry name" value="GTP1OBG"/>
</dbReference>
<dbReference type="SUPFAM" id="SSF82051">
    <property type="entry name" value="Obg GTP-binding protein N-terminal domain"/>
    <property type="match status" value="1"/>
</dbReference>
<dbReference type="SUPFAM" id="SSF52540">
    <property type="entry name" value="P-loop containing nucleoside triphosphate hydrolases"/>
    <property type="match status" value="1"/>
</dbReference>
<dbReference type="PROSITE" id="PS51710">
    <property type="entry name" value="G_OBG"/>
    <property type="match status" value="1"/>
</dbReference>
<dbReference type="PROSITE" id="PS00905">
    <property type="entry name" value="GTP1_OBG"/>
    <property type="match status" value="1"/>
</dbReference>
<dbReference type="PROSITE" id="PS51883">
    <property type="entry name" value="OBG"/>
    <property type="match status" value="1"/>
</dbReference>
<protein>
    <recommendedName>
        <fullName evidence="1">GTPase Obg</fullName>
        <ecNumber evidence="1">3.6.5.-</ecNumber>
    </recommendedName>
    <alternativeName>
        <fullName evidence="1">GTP-binding protein Obg</fullName>
    </alternativeName>
</protein>
<evidence type="ECO:0000255" key="1">
    <source>
        <dbReference type="HAMAP-Rule" id="MF_01454"/>
    </source>
</evidence>
<evidence type="ECO:0000255" key="2">
    <source>
        <dbReference type="PROSITE-ProRule" id="PRU01231"/>
    </source>
</evidence>
<evidence type="ECO:0000256" key="3">
    <source>
        <dbReference type="SAM" id="MobiDB-lite"/>
    </source>
</evidence>
<comment type="function">
    <text evidence="1">An essential GTPase which binds GTP, GDP and possibly (p)ppGpp with moderate affinity, with high nucleotide exchange rates and a fairly low GTP hydrolysis rate. Plays a role in control of the cell cycle, stress response, ribosome biogenesis and in those bacteria that undergo differentiation, in morphogenesis control.</text>
</comment>
<comment type="cofactor">
    <cofactor evidence="1">
        <name>Mg(2+)</name>
        <dbReference type="ChEBI" id="CHEBI:18420"/>
    </cofactor>
</comment>
<comment type="subunit">
    <text evidence="1">Monomer.</text>
</comment>
<comment type="subcellular location">
    <subcellularLocation>
        <location evidence="1">Cytoplasm</location>
    </subcellularLocation>
</comment>
<comment type="similarity">
    <text evidence="1">Belongs to the TRAFAC class OBG-HflX-like GTPase superfamily. OBG GTPase family.</text>
</comment>
<reference key="1">
    <citation type="journal article" date="2010" name="Genome Biol. Evol.">
        <title>Continuing evolution of Burkholderia mallei through genome reduction and large-scale rearrangements.</title>
        <authorList>
            <person name="Losada L."/>
            <person name="Ronning C.M."/>
            <person name="DeShazer D."/>
            <person name="Woods D."/>
            <person name="Fedorova N."/>
            <person name="Kim H.S."/>
            <person name="Shabalina S.A."/>
            <person name="Pearson T.R."/>
            <person name="Brinkac L."/>
            <person name="Tan P."/>
            <person name="Nandi T."/>
            <person name="Crabtree J."/>
            <person name="Badger J."/>
            <person name="Beckstrom-Sternberg S."/>
            <person name="Saqib M."/>
            <person name="Schutzer S.E."/>
            <person name="Keim P."/>
            <person name="Nierman W.C."/>
        </authorList>
    </citation>
    <scope>NUCLEOTIDE SEQUENCE [LARGE SCALE GENOMIC DNA]</scope>
    <source>
        <strain>SAVP1</strain>
    </source>
</reference>
<proteinExistence type="inferred from homology"/>
<feature type="chain" id="PRO_0000385785" description="GTPase Obg">
    <location>
        <begin position="1"/>
        <end position="372"/>
    </location>
</feature>
<feature type="domain" description="Obg" evidence="2">
    <location>
        <begin position="1"/>
        <end position="159"/>
    </location>
</feature>
<feature type="domain" description="OBG-type G" evidence="1">
    <location>
        <begin position="160"/>
        <end position="334"/>
    </location>
</feature>
<feature type="region of interest" description="Disordered" evidence="3">
    <location>
        <begin position="128"/>
        <end position="147"/>
    </location>
</feature>
<feature type="binding site" evidence="1">
    <location>
        <begin position="166"/>
        <end position="173"/>
    </location>
    <ligand>
        <name>GTP</name>
        <dbReference type="ChEBI" id="CHEBI:37565"/>
    </ligand>
</feature>
<feature type="binding site" evidence="1">
    <location>
        <position position="173"/>
    </location>
    <ligand>
        <name>Mg(2+)</name>
        <dbReference type="ChEBI" id="CHEBI:18420"/>
    </ligand>
</feature>
<feature type="binding site" evidence="1">
    <location>
        <begin position="191"/>
        <end position="195"/>
    </location>
    <ligand>
        <name>GTP</name>
        <dbReference type="ChEBI" id="CHEBI:37565"/>
    </ligand>
</feature>
<feature type="binding site" evidence="1">
    <location>
        <position position="193"/>
    </location>
    <ligand>
        <name>Mg(2+)</name>
        <dbReference type="ChEBI" id="CHEBI:18420"/>
    </ligand>
</feature>
<feature type="binding site" evidence="1">
    <location>
        <begin position="213"/>
        <end position="216"/>
    </location>
    <ligand>
        <name>GTP</name>
        <dbReference type="ChEBI" id="CHEBI:37565"/>
    </ligand>
</feature>
<feature type="binding site" evidence="1">
    <location>
        <begin position="284"/>
        <end position="287"/>
    </location>
    <ligand>
        <name>GTP</name>
        <dbReference type="ChEBI" id="CHEBI:37565"/>
    </ligand>
</feature>
<feature type="binding site" evidence="1">
    <location>
        <begin position="315"/>
        <end position="317"/>
    </location>
    <ligand>
        <name>GTP</name>
        <dbReference type="ChEBI" id="CHEBI:37565"/>
    </ligand>
</feature>
<name>OBG_BURMS</name>
<accession>A1V0P1</accession>